<feature type="chain" id="PRO_0000162526" description="Arsenate reductase">
    <location>
        <begin position="1"/>
        <end position="131"/>
    </location>
</feature>
<feature type="active site" description="Nucleophile" evidence="1">
    <location>
        <position position="10"/>
    </location>
</feature>
<feature type="active site" description="Nucleophile" evidence="1">
    <location>
        <position position="82"/>
    </location>
</feature>
<feature type="active site" description="Nucleophile" evidence="1">
    <location>
        <position position="89"/>
    </location>
</feature>
<feature type="disulfide bond" description="Redox-active; alternate" evidence="1">
    <location>
        <begin position="10"/>
        <end position="82"/>
    </location>
</feature>
<feature type="disulfide bond" description="Redox-active; alternate" evidence="1">
    <location>
        <begin position="82"/>
        <end position="89"/>
    </location>
</feature>
<dbReference type="EC" id="1.20.4.4" evidence="1"/>
<dbReference type="EMBL" id="AP003139">
    <property type="protein sequence ID" value="BAB43887.1"/>
    <property type="molecule type" value="Genomic_DNA"/>
</dbReference>
<dbReference type="RefSeq" id="WP_000358995.1">
    <property type="nucleotide sequence ID" value="NC_003140.1"/>
</dbReference>
<dbReference type="BMRB" id="P0A005"/>
<dbReference type="SMR" id="P0A005"/>
<dbReference type="EnsemblBacteria" id="BAB43887">
    <property type="protein sequence ID" value="BAB43887"/>
    <property type="gene ID" value="BAB43887"/>
</dbReference>
<dbReference type="KEGG" id="sau:SAP018"/>
<dbReference type="HOGENOM" id="CLU_071415_3_2_9"/>
<dbReference type="GO" id="GO:0005737">
    <property type="term" value="C:cytoplasm"/>
    <property type="evidence" value="ECO:0007669"/>
    <property type="project" value="UniProtKB-SubCell"/>
</dbReference>
<dbReference type="GO" id="GO:0030612">
    <property type="term" value="F:arsenate reductase (thioredoxin) activity"/>
    <property type="evidence" value="ECO:0007669"/>
    <property type="project" value="UniProtKB-UniRule"/>
</dbReference>
<dbReference type="GO" id="GO:0004725">
    <property type="term" value="F:protein tyrosine phosphatase activity"/>
    <property type="evidence" value="ECO:0007669"/>
    <property type="project" value="InterPro"/>
</dbReference>
<dbReference type="GO" id="GO:0046685">
    <property type="term" value="P:response to arsenic-containing substance"/>
    <property type="evidence" value="ECO:0007669"/>
    <property type="project" value="UniProtKB-KW"/>
</dbReference>
<dbReference type="CDD" id="cd16345">
    <property type="entry name" value="LMWP_ArsC"/>
    <property type="match status" value="1"/>
</dbReference>
<dbReference type="FunFam" id="3.40.50.2300:FF:000237">
    <property type="entry name" value="Arsenate reductase"/>
    <property type="match status" value="1"/>
</dbReference>
<dbReference type="Gene3D" id="3.40.50.2300">
    <property type="match status" value="1"/>
</dbReference>
<dbReference type="HAMAP" id="MF_01624">
    <property type="entry name" value="Arsenate_reduct"/>
    <property type="match status" value="1"/>
</dbReference>
<dbReference type="InterPro" id="IPR014064">
    <property type="entry name" value="Arsenate_reductase_ArsC"/>
</dbReference>
<dbReference type="InterPro" id="IPR023485">
    <property type="entry name" value="Ptyr_pPase"/>
</dbReference>
<dbReference type="InterPro" id="IPR036196">
    <property type="entry name" value="Ptyr_pPase_sf"/>
</dbReference>
<dbReference type="NCBIfam" id="TIGR02691">
    <property type="entry name" value="arsC_pI258_fam"/>
    <property type="match status" value="1"/>
</dbReference>
<dbReference type="NCBIfam" id="NF010053">
    <property type="entry name" value="PRK13530.1"/>
    <property type="match status" value="1"/>
</dbReference>
<dbReference type="PANTHER" id="PTHR43428">
    <property type="entry name" value="ARSENATE REDUCTASE"/>
    <property type="match status" value="1"/>
</dbReference>
<dbReference type="PANTHER" id="PTHR43428:SF1">
    <property type="entry name" value="ARSENATE REDUCTASE"/>
    <property type="match status" value="1"/>
</dbReference>
<dbReference type="Pfam" id="PF01451">
    <property type="entry name" value="LMWPc"/>
    <property type="match status" value="1"/>
</dbReference>
<dbReference type="SMART" id="SM00226">
    <property type="entry name" value="LMWPc"/>
    <property type="match status" value="1"/>
</dbReference>
<dbReference type="SUPFAM" id="SSF52788">
    <property type="entry name" value="Phosphotyrosine protein phosphatases I"/>
    <property type="match status" value="1"/>
</dbReference>
<sequence>MDKKTIYFICTGNSCRSQMAEGWGKEILGEGWNVYSAGIETHGVNPKAIEAMKEVDIDISNHTSDLIDNDILKQSDLVVTLCSDADNNCPILPPNVKKEHWGFDDPAGKEWSEFQRVRDEIKLAIEKFKLR</sequence>
<reference key="1">
    <citation type="journal article" date="2001" name="Lancet">
        <title>Whole genome sequencing of meticillin-resistant Staphylococcus aureus.</title>
        <authorList>
            <person name="Kuroda M."/>
            <person name="Ohta T."/>
            <person name="Uchiyama I."/>
            <person name="Baba T."/>
            <person name="Yuzawa H."/>
            <person name="Kobayashi I."/>
            <person name="Cui L."/>
            <person name="Oguchi A."/>
            <person name="Aoki K."/>
            <person name="Nagai Y."/>
            <person name="Lian J.-Q."/>
            <person name="Ito T."/>
            <person name="Kanamori M."/>
            <person name="Matsumaru H."/>
            <person name="Maruyama A."/>
            <person name="Murakami H."/>
            <person name="Hosoyama A."/>
            <person name="Mizutani-Ui Y."/>
            <person name="Takahashi N.K."/>
            <person name="Sawano T."/>
            <person name="Inoue R."/>
            <person name="Kaito C."/>
            <person name="Sekimizu K."/>
            <person name="Hirakawa H."/>
            <person name="Kuhara S."/>
            <person name="Goto S."/>
            <person name="Yabuzaki J."/>
            <person name="Kanehisa M."/>
            <person name="Yamashita A."/>
            <person name="Oshima K."/>
            <person name="Furuya K."/>
            <person name="Yoshino C."/>
            <person name="Shiba T."/>
            <person name="Hattori M."/>
            <person name="Ogasawara N."/>
            <person name="Hayashi H."/>
            <person name="Hiramatsu K."/>
        </authorList>
    </citation>
    <scope>NUCLEOTIDE SEQUENCE [LARGE SCALE GENOMIC DNA]</scope>
    <source>
        <strain>N315</strain>
    </source>
</reference>
<reference key="2">
    <citation type="submission" date="2007-10" db="UniProtKB">
        <title>Shotgun proteomic analysis of total and membrane protein extracts of S. aureus strain N315.</title>
        <authorList>
            <person name="Vaezzadeh A.R."/>
            <person name="Deshusses J."/>
            <person name="Lescuyer P."/>
            <person name="Hochstrasser D.F."/>
        </authorList>
    </citation>
    <scope>IDENTIFICATION BY MASS SPECTROMETRY [LARGE SCALE ANALYSIS]</scope>
    <source>
        <strain>N315</strain>
    </source>
</reference>
<evidence type="ECO:0000255" key="1">
    <source>
        <dbReference type="HAMAP-Rule" id="MF_01624"/>
    </source>
</evidence>
<protein>
    <recommendedName>
        <fullName evidence="1">Arsenate reductase</fullName>
        <ecNumber evidence="1">1.20.4.4</ecNumber>
    </recommendedName>
</protein>
<proteinExistence type="evidence at protein level"/>
<gene>
    <name evidence="1" type="primary">arsC</name>
    <name type="ordered locus">SAP018</name>
</gene>
<geneLocation type="plasmid">
    <name>pN315</name>
</geneLocation>
<keyword id="KW-0059">Arsenical resistance</keyword>
<keyword id="KW-0963">Cytoplasm</keyword>
<keyword id="KW-1015">Disulfide bond</keyword>
<keyword id="KW-0560">Oxidoreductase</keyword>
<keyword id="KW-0614">Plasmid</keyword>
<keyword id="KW-0676">Redox-active center</keyword>
<organism>
    <name type="scientific">Staphylococcus aureus (strain N315)</name>
    <dbReference type="NCBI Taxonomy" id="158879"/>
    <lineage>
        <taxon>Bacteria</taxon>
        <taxon>Bacillati</taxon>
        <taxon>Bacillota</taxon>
        <taxon>Bacilli</taxon>
        <taxon>Bacillales</taxon>
        <taxon>Staphylococcaceae</taxon>
        <taxon>Staphylococcus</taxon>
    </lineage>
</organism>
<name>ARSC_STAAN</name>
<accession>P0A005</accession>
<accession>P30330</accession>
<comment type="function">
    <text evidence="1">Catalyzes the reduction of arsenate [As(V)] to arsenite [As(III)].</text>
</comment>
<comment type="catalytic activity">
    <reaction evidence="1">
        <text>arsenate + [thioredoxin]-dithiol + H(+) = arsenite + [thioredoxin]-disulfide + H2O</text>
        <dbReference type="Rhea" id="RHEA:43848"/>
        <dbReference type="Rhea" id="RHEA-COMP:10698"/>
        <dbReference type="Rhea" id="RHEA-COMP:10700"/>
        <dbReference type="ChEBI" id="CHEBI:15377"/>
        <dbReference type="ChEBI" id="CHEBI:15378"/>
        <dbReference type="ChEBI" id="CHEBI:29242"/>
        <dbReference type="ChEBI" id="CHEBI:29950"/>
        <dbReference type="ChEBI" id="CHEBI:48597"/>
        <dbReference type="ChEBI" id="CHEBI:50058"/>
        <dbReference type="EC" id="1.20.4.4"/>
    </reaction>
</comment>
<comment type="subcellular location">
    <subcellularLocation>
        <location evidence="1">Cytoplasm</location>
    </subcellularLocation>
</comment>
<comment type="similarity">
    <text evidence="1">Belongs to the low molecular weight phosphotyrosine protein phosphatase family. Thioredoxin-coupled ArsC subfamily.</text>
</comment>